<proteinExistence type="inferred from homology"/>
<comment type="function">
    <text evidence="2">Component of the cytochrome c oxidase, the last enzyme in the mitochondrial electron transport chain which drives oxidative phosphorylation. The respiratory chain contains 3 multisubunit complexes succinate dehydrogenase (complex II, CII), ubiquinol-cytochrome c oxidoreductase (cytochrome b-c1 complex, complex III, CIII) and cytochrome c oxidase (complex IV, CIV), that cooperate to transfer electrons derived from NADH and succinate to molecular oxygen, creating an electrochemical gradient over the inner membrane that drives transmembrane transport and the ATP synthase. Cytochrome c oxidase is the component of the respiratory chain that catalyzes the reduction of oxygen to water. Electrons originating from reduced cytochrome c in the intermembrane space (IMS) are transferred via the dinuclear copper A center (CU(A)) of subunit 2 and heme A of subunit 1 to the active site in subunit 1, a binuclear center (BNC) formed by heme A3 and copper B (CU(B)). The BNC reduces molecular oxygen to 2 water molecules using 4 electrons from cytochrome c in the IMS and 4 protons from the mitochondrial matrix.</text>
</comment>
<comment type="catalytic activity">
    <reaction evidence="2">
        <text>4 Fe(II)-[cytochrome c] + O2 + 8 H(+)(in) = 4 Fe(III)-[cytochrome c] + 2 H2O + 4 H(+)(out)</text>
        <dbReference type="Rhea" id="RHEA:11436"/>
        <dbReference type="Rhea" id="RHEA-COMP:10350"/>
        <dbReference type="Rhea" id="RHEA-COMP:14399"/>
        <dbReference type="ChEBI" id="CHEBI:15377"/>
        <dbReference type="ChEBI" id="CHEBI:15378"/>
        <dbReference type="ChEBI" id="CHEBI:15379"/>
        <dbReference type="ChEBI" id="CHEBI:29033"/>
        <dbReference type="ChEBI" id="CHEBI:29034"/>
        <dbReference type="EC" id="7.1.1.9"/>
    </reaction>
    <physiologicalReaction direction="left-to-right" evidence="2">
        <dbReference type="Rhea" id="RHEA:11437"/>
    </physiologicalReaction>
</comment>
<comment type="cofactor">
    <cofactor evidence="2">
        <name>heme</name>
        <dbReference type="ChEBI" id="CHEBI:30413"/>
    </cofactor>
    <text evidence="2">Binds 2 heme A groups non-covalently per subunit.</text>
</comment>
<comment type="cofactor">
    <cofactor evidence="2">
        <name>Cu cation</name>
        <dbReference type="ChEBI" id="CHEBI:23378"/>
    </cofactor>
    <text evidence="2">Binds a copper B center.</text>
</comment>
<comment type="pathway">
    <text evidence="2">Energy metabolism; oxidative phosphorylation.</text>
</comment>
<comment type="subunit">
    <text evidence="2">Component of the cytochrome c oxidase (complex IV, CIV), a multisubunit enzyme composed of a catalytic core of 3 subunits and several supernumerary subunits. The complex exists as a monomer or a dimer and forms supercomplexes (SCs) in the inner mitochondrial membrane with ubiquinol-cytochrome c oxidoreductase (cytochrome b-c1 complex, complex III, CIII).</text>
</comment>
<comment type="subcellular location">
    <subcellularLocation>
        <location evidence="2">Mitochondrion inner membrane</location>
        <topology evidence="2">Multi-pass membrane protein</topology>
    </subcellularLocation>
</comment>
<comment type="similarity">
    <text evidence="4">Belongs to the heme-copper respiratory oxidase family.</text>
</comment>
<keyword id="KW-0106">Calcium</keyword>
<keyword id="KW-0186">Copper</keyword>
<keyword id="KW-0249">Electron transport</keyword>
<keyword id="KW-0349">Heme</keyword>
<keyword id="KW-0408">Iron</keyword>
<keyword id="KW-0460">Magnesium</keyword>
<keyword id="KW-0472">Membrane</keyword>
<keyword id="KW-0479">Metal-binding</keyword>
<keyword id="KW-0496">Mitochondrion</keyword>
<keyword id="KW-0999">Mitochondrion inner membrane</keyword>
<keyword id="KW-0679">Respiratory chain</keyword>
<keyword id="KW-1278">Translocase</keyword>
<keyword id="KW-0812">Transmembrane</keyword>
<keyword id="KW-1133">Transmembrane helix</keyword>
<keyword id="KW-0813">Transport</keyword>
<dbReference type="EC" id="7.1.1.9"/>
<dbReference type="EMBL" id="AF321878">
    <property type="protein sequence ID" value="AAK00951.1"/>
    <property type="molecule type" value="Genomic_DNA"/>
</dbReference>
<dbReference type="EMBL" id="AF321879">
    <property type="protein sequence ID" value="AAK00952.1"/>
    <property type="molecule type" value="Genomic_DNA"/>
</dbReference>
<dbReference type="SMR" id="Q9B840"/>
<dbReference type="UniPathway" id="UPA00705"/>
<dbReference type="GO" id="GO:0005743">
    <property type="term" value="C:mitochondrial inner membrane"/>
    <property type="evidence" value="ECO:0007669"/>
    <property type="project" value="UniProtKB-SubCell"/>
</dbReference>
<dbReference type="GO" id="GO:0045277">
    <property type="term" value="C:respiratory chain complex IV"/>
    <property type="evidence" value="ECO:0007669"/>
    <property type="project" value="InterPro"/>
</dbReference>
<dbReference type="GO" id="GO:0004129">
    <property type="term" value="F:cytochrome-c oxidase activity"/>
    <property type="evidence" value="ECO:0007669"/>
    <property type="project" value="UniProtKB-EC"/>
</dbReference>
<dbReference type="GO" id="GO:0020037">
    <property type="term" value="F:heme binding"/>
    <property type="evidence" value="ECO:0007669"/>
    <property type="project" value="InterPro"/>
</dbReference>
<dbReference type="GO" id="GO:0046872">
    <property type="term" value="F:metal ion binding"/>
    <property type="evidence" value="ECO:0007669"/>
    <property type="project" value="UniProtKB-KW"/>
</dbReference>
<dbReference type="GO" id="GO:0015990">
    <property type="term" value="P:electron transport coupled proton transport"/>
    <property type="evidence" value="ECO:0007669"/>
    <property type="project" value="TreeGrafter"/>
</dbReference>
<dbReference type="GO" id="GO:0006123">
    <property type="term" value="P:mitochondrial electron transport, cytochrome c to oxygen"/>
    <property type="evidence" value="ECO:0007669"/>
    <property type="project" value="TreeGrafter"/>
</dbReference>
<dbReference type="CDD" id="cd01663">
    <property type="entry name" value="Cyt_c_Oxidase_I"/>
    <property type="match status" value="1"/>
</dbReference>
<dbReference type="FunFam" id="1.20.210.10:FF:000001">
    <property type="entry name" value="Cytochrome c oxidase subunit 1"/>
    <property type="match status" value="1"/>
</dbReference>
<dbReference type="Gene3D" id="1.20.210.10">
    <property type="entry name" value="Cytochrome c oxidase-like, subunit I domain"/>
    <property type="match status" value="1"/>
</dbReference>
<dbReference type="InterPro" id="IPR023616">
    <property type="entry name" value="Cyt_c_oxase-like_su1_dom"/>
</dbReference>
<dbReference type="InterPro" id="IPR036927">
    <property type="entry name" value="Cyt_c_oxase-like_su1_sf"/>
</dbReference>
<dbReference type="InterPro" id="IPR000883">
    <property type="entry name" value="Cyt_C_Oxase_1"/>
</dbReference>
<dbReference type="InterPro" id="IPR023615">
    <property type="entry name" value="Cyt_c_Oxase_su1_BS"/>
</dbReference>
<dbReference type="InterPro" id="IPR033944">
    <property type="entry name" value="Cyt_c_oxase_su1_dom"/>
</dbReference>
<dbReference type="PANTHER" id="PTHR10422">
    <property type="entry name" value="CYTOCHROME C OXIDASE SUBUNIT 1"/>
    <property type="match status" value="1"/>
</dbReference>
<dbReference type="PANTHER" id="PTHR10422:SF18">
    <property type="entry name" value="CYTOCHROME C OXIDASE SUBUNIT 1"/>
    <property type="match status" value="1"/>
</dbReference>
<dbReference type="Pfam" id="PF00115">
    <property type="entry name" value="COX1"/>
    <property type="match status" value="1"/>
</dbReference>
<dbReference type="PRINTS" id="PR01165">
    <property type="entry name" value="CYCOXIDASEI"/>
</dbReference>
<dbReference type="SUPFAM" id="SSF81442">
    <property type="entry name" value="Cytochrome c oxidase subunit I-like"/>
    <property type="match status" value="1"/>
</dbReference>
<dbReference type="PROSITE" id="PS50855">
    <property type="entry name" value="COX1"/>
    <property type="match status" value="1"/>
</dbReference>
<dbReference type="PROSITE" id="PS00077">
    <property type="entry name" value="COX1_CUB"/>
    <property type="match status" value="1"/>
</dbReference>
<dbReference type="PROSITE" id="PS00572">
    <property type="entry name" value="GLYCOSYL_HYDROL_F1_1"/>
    <property type="match status" value="1"/>
</dbReference>
<feature type="chain" id="PRO_0000183376" description="Cytochrome c oxidase subunit 1">
    <location>
        <begin position="1"/>
        <end position="514"/>
    </location>
</feature>
<feature type="transmembrane region" description="Helical" evidence="3">
    <location>
        <begin position="16"/>
        <end position="36"/>
    </location>
</feature>
<feature type="transmembrane region" description="Helical" evidence="3">
    <location>
        <begin position="62"/>
        <end position="82"/>
    </location>
</feature>
<feature type="transmembrane region" description="Helical" evidence="3">
    <location>
        <begin position="101"/>
        <end position="121"/>
    </location>
</feature>
<feature type="transmembrane region" description="Helical" evidence="3">
    <location>
        <begin position="144"/>
        <end position="164"/>
    </location>
</feature>
<feature type="transmembrane region" description="Helical" evidence="3">
    <location>
        <begin position="182"/>
        <end position="202"/>
    </location>
</feature>
<feature type="transmembrane region" description="Helical" evidence="3">
    <location>
        <begin position="233"/>
        <end position="253"/>
    </location>
</feature>
<feature type="transmembrane region" description="Helical" evidence="3">
    <location>
        <begin position="267"/>
        <end position="287"/>
    </location>
</feature>
<feature type="transmembrane region" description="Helical" evidence="3">
    <location>
        <begin position="304"/>
        <end position="324"/>
    </location>
</feature>
<feature type="transmembrane region" description="Helical" evidence="3">
    <location>
        <begin position="337"/>
        <end position="357"/>
    </location>
</feature>
<feature type="transmembrane region" description="Helical" evidence="3">
    <location>
        <begin position="379"/>
        <end position="399"/>
    </location>
</feature>
<feature type="transmembrane region" description="Helical" evidence="3">
    <location>
        <begin position="413"/>
        <end position="433"/>
    </location>
</feature>
<feature type="transmembrane region" description="Helical" evidence="3">
    <location>
        <begin position="451"/>
        <end position="471"/>
    </location>
</feature>
<feature type="binding site" evidence="2">
    <location>
        <position position="39"/>
    </location>
    <ligand>
        <name>Ca(2+)</name>
        <dbReference type="ChEBI" id="CHEBI:29108"/>
    </ligand>
</feature>
<feature type="binding site" evidence="2">
    <location>
        <position position="44"/>
    </location>
    <ligand>
        <name>Ca(2+)</name>
        <dbReference type="ChEBI" id="CHEBI:29108"/>
    </ligand>
</feature>
<feature type="binding site" description="axial binding residue" evidence="2">
    <location>
        <position position="60"/>
    </location>
    <ligand>
        <name>Fe(II)-heme a</name>
        <dbReference type="ChEBI" id="CHEBI:61715"/>
        <note>low-spin</note>
    </ligand>
    <ligandPart>
        <name>Fe</name>
        <dbReference type="ChEBI" id="CHEBI:18248"/>
    </ligandPart>
</feature>
<feature type="binding site" evidence="2">
    <location>
        <position position="239"/>
    </location>
    <ligand>
        <name>Cu cation</name>
        <dbReference type="ChEBI" id="CHEBI:23378"/>
        <label>B</label>
    </ligand>
</feature>
<feature type="binding site" evidence="1">
    <location>
        <position position="243"/>
    </location>
    <ligand>
        <name>O2</name>
        <dbReference type="ChEBI" id="CHEBI:15379"/>
    </ligand>
</feature>
<feature type="binding site" evidence="2">
    <location>
        <position position="289"/>
    </location>
    <ligand>
        <name>Cu cation</name>
        <dbReference type="ChEBI" id="CHEBI:23378"/>
        <label>B</label>
    </ligand>
</feature>
<feature type="binding site" evidence="2">
    <location>
        <position position="290"/>
    </location>
    <ligand>
        <name>Cu cation</name>
        <dbReference type="ChEBI" id="CHEBI:23378"/>
        <label>B</label>
    </ligand>
</feature>
<feature type="binding site" evidence="2">
    <location>
        <position position="367"/>
    </location>
    <ligand>
        <name>Mg(2+)</name>
        <dbReference type="ChEBI" id="CHEBI:18420"/>
        <note>ligand shared with subunit 2</note>
    </ligand>
</feature>
<feature type="binding site" evidence="2">
    <location>
        <position position="368"/>
    </location>
    <ligand>
        <name>Mg(2+)</name>
        <dbReference type="ChEBI" id="CHEBI:18420"/>
        <note>ligand shared with subunit 2</note>
    </ligand>
</feature>
<feature type="binding site" description="axial binding residue" evidence="2">
    <location>
        <position position="375"/>
    </location>
    <ligand>
        <name>heme a3</name>
        <dbReference type="ChEBI" id="CHEBI:83282"/>
        <note>high-spin</note>
    </ligand>
    <ligandPart>
        <name>Fe</name>
        <dbReference type="ChEBI" id="CHEBI:18248"/>
    </ligandPart>
</feature>
<feature type="binding site" description="axial binding residue" evidence="2">
    <location>
        <position position="377"/>
    </location>
    <ligand>
        <name>Fe(II)-heme a</name>
        <dbReference type="ChEBI" id="CHEBI:61715"/>
        <note>low-spin</note>
    </ligand>
    <ligandPart>
        <name>Fe</name>
        <dbReference type="ChEBI" id="CHEBI:18248"/>
    </ligandPart>
</feature>
<feature type="cross-link" description="1'-histidyl-3'-tyrosine (His-Tyr)" evidence="2">
    <location>
        <begin position="239"/>
        <end position="243"/>
    </location>
</feature>
<feature type="sequence variant" description="In haplotype 2.">
    <original>T</original>
    <variation>S</variation>
    <location>
        <position position="155"/>
    </location>
</feature>
<feature type="sequence variant" description="In haplotype 2.">
    <original>T</original>
    <variation>A</variation>
    <location>
        <position position="206"/>
    </location>
</feature>
<feature type="sequence variant" description="In haplotype 2.">
    <original>M</original>
    <variation>I</variation>
    <location>
        <position position="491"/>
    </location>
</feature>
<organism>
    <name type="scientific">Ostrinia nubilalis</name>
    <name type="common">European corn borer</name>
    <name type="synonym">Pyralis nubilalis</name>
    <dbReference type="NCBI Taxonomy" id="29057"/>
    <lineage>
        <taxon>Eukaryota</taxon>
        <taxon>Metazoa</taxon>
        <taxon>Ecdysozoa</taxon>
        <taxon>Arthropoda</taxon>
        <taxon>Hexapoda</taxon>
        <taxon>Insecta</taxon>
        <taxon>Pterygota</taxon>
        <taxon>Neoptera</taxon>
        <taxon>Endopterygota</taxon>
        <taxon>Lepidoptera</taxon>
        <taxon>Glossata</taxon>
        <taxon>Ditrysia</taxon>
        <taxon>Pyraloidea</taxon>
        <taxon>Crambidae</taxon>
        <taxon>Pyraustinae</taxon>
        <taxon>Ostrinia</taxon>
    </lineage>
</organism>
<reference key="1">
    <citation type="submission" date="2000-11" db="EMBL/GenBank/DDBJ databases">
        <title>Ostrinia nubilalis cytochrome c oxidase haplotype variation.</title>
        <authorList>
            <person name="Coates B.S."/>
            <person name="Hellmich R.L."/>
            <person name="Lewis L.C."/>
        </authorList>
    </citation>
    <scope>NUCLEOTIDE SEQUENCE [GENOMIC DNA]</scope>
    <source>
        <strain>Haplotype 2</strain>
        <strain>haplotype 3</strain>
    </source>
</reference>
<protein>
    <recommendedName>
        <fullName>Cytochrome c oxidase subunit 1</fullName>
        <ecNumber>7.1.1.9</ecNumber>
    </recommendedName>
    <alternativeName>
        <fullName>Cytochrome c oxidase polypeptide I</fullName>
    </alternativeName>
</protein>
<geneLocation type="mitochondrion"/>
<name>COX1_OSTNU</name>
<evidence type="ECO:0000250" key="1">
    <source>
        <dbReference type="UniProtKB" id="P00396"/>
    </source>
</evidence>
<evidence type="ECO:0000250" key="2">
    <source>
        <dbReference type="UniProtKB" id="P00401"/>
    </source>
</evidence>
<evidence type="ECO:0000255" key="3"/>
<evidence type="ECO:0000305" key="4"/>
<gene>
    <name type="primary">COI</name>
</gene>
<sequence length="514" mass="57395">MSRKWLYSTNHKDIGTLYFIFGIWSGMVGTSLSLLIRAELGNPGSLIGDDQIYNTIVTAHAFIMIFFMVMPIMIGGFGNWLVPLMLGAPDMAFPRMNNMSFWLLPPSLTLLISSSIVENGAGTGWTVYPPLSSNIAHGGSSVDLAIFSLHLAGITSILGAINFITTIINMRINGMSFDQMPLFVWSVGITALLLLLSLPVLAGAFTMLTTDRNLNTSFFDPAGGEILFYIQHLFWFFGHPEVYILILPGFGMISMLFHKKEEKKKHFGSLGMIYAMMAIGLLGFVVWAHHMFTVGMDIDTRAYFTSATMIIAVPTGIKIFSWLATLHGTQINYSPSILWSLGFVFLFTVGGLTGVVLANPSIDIALHDTYYVVAHFHYVLSMGAVFAIIAGFIHWYPLFTGLSLNPYFLKIQFFTMFIGVNLTFFPQHFLGLAGMPRRYSDYPDAYISWNIISSLGSYISLLAVMLILIIIWESMINQRMILFSLNLTSSMEWYKSKLPPAEHSYNELPILSNF</sequence>
<accession>Q9B840</accession>
<accession>Q9B841</accession>